<organism>
    <name type="scientific">Homo sapiens</name>
    <name type="common">Human</name>
    <dbReference type="NCBI Taxonomy" id="9606"/>
    <lineage>
        <taxon>Eukaryota</taxon>
        <taxon>Metazoa</taxon>
        <taxon>Chordata</taxon>
        <taxon>Craniata</taxon>
        <taxon>Vertebrata</taxon>
        <taxon>Euteleostomi</taxon>
        <taxon>Mammalia</taxon>
        <taxon>Eutheria</taxon>
        <taxon>Euarchontoglires</taxon>
        <taxon>Primates</taxon>
        <taxon>Haplorrhini</taxon>
        <taxon>Catarrhini</taxon>
        <taxon>Hominidae</taxon>
        <taxon>Homo</taxon>
    </lineage>
</organism>
<feature type="signal peptide" evidence="5">
    <location>
        <begin position="1"/>
        <end position="32"/>
    </location>
</feature>
<feature type="chain" id="PRO_0000011030" description="Interleukin-17 receptor A">
    <location>
        <begin position="33"/>
        <end position="866"/>
    </location>
</feature>
<feature type="topological domain" description="Extracellular" evidence="2">
    <location>
        <begin position="33"/>
        <end position="320"/>
    </location>
</feature>
<feature type="transmembrane region" description="Helical" evidence="2">
    <location>
        <begin position="321"/>
        <end position="341"/>
    </location>
</feature>
<feature type="topological domain" description="Cytoplasmic" evidence="2">
    <location>
        <begin position="342"/>
        <end position="866"/>
    </location>
</feature>
<feature type="domain" description="SEFIR" evidence="3">
    <location>
        <begin position="377"/>
        <end position="534"/>
    </location>
</feature>
<feature type="region of interest" description="Disordered" evidence="4">
    <location>
        <begin position="717"/>
        <end position="736"/>
    </location>
</feature>
<feature type="region of interest" description="Disordered" evidence="4">
    <location>
        <begin position="773"/>
        <end position="840"/>
    </location>
</feature>
<feature type="compositionally biased region" description="Polar residues" evidence="4">
    <location>
        <begin position="788"/>
        <end position="801"/>
    </location>
</feature>
<feature type="compositionally biased region" description="Acidic residues" evidence="4">
    <location>
        <begin position="809"/>
        <end position="819"/>
    </location>
</feature>
<feature type="modified residue" description="Phosphoserine" evidence="24">
    <location>
        <position position="708"/>
    </location>
</feature>
<feature type="modified residue" description="Phosphoserine" evidence="1">
    <location>
        <position position="736"/>
    </location>
</feature>
<feature type="glycosylation site" description="N-linked (GlcNAc...) asparagine" evidence="10 13">
    <location>
        <position position="49"/>
    </location>
</feature>
<feature type="glycosylation site" description="N-linked (GlcNAc...) asparagine" evidence="10 13">
    <location>
        <position position="54"/>
    </location>
</feature>
<feature type="glycosylation site" description="N-linked (GlcNAc...) asparagine" evidence="10">
    <location>
        <position position="67"/>
    </location>
</feature>
<feature type="glycosylation site" description="N-linked (GlcNAc...) asparagine" evidence="2">
    <location>
        <position position="206"/>
    </location>
</feature>
<feature type="glycosylation site" description="N-linked (GlcNAc...) asparagine" evidence="10 13">
    <location>
        <position position="225"/>
    </location>
</feature>
<feature type="glycosylation site" description="N-linked (GlcNAc...) asparagine" evidence="2">
    <location>
        <position position="242"/>
    </location>
</feature>
<feature type="glycosylation site" description="N-linked (GlcNAc...) asparagine" evidence="10">
    <location>
        <position position="265"/>
    </location>
</feature>
<feature type="disulfide bond" evidence="10 13">
    <location>
        <begin position="43"/>
        <end position="50"/>
    </location>
</feature>
<feature type="disulfide bond" evidence="10 13">
    <location>
        <begin position="57"/>
        <end position="126"/>
    </location>
</feature>
<feature type="disulfide bond" evidence="10 13">
    <location>
        <begin position="185"/>
        <end position="196"/>
    </location>
</feature>
<feature type="disulfide bond" evidence="10 13">
    <location>
        <begin position="245"/>
        <end position="276"/>
    </location>
</feature>
<feature type="disulfide bond" evidence="13">
    <location>
        <begin position="277"/>
        <end position="303"/>
    </location>
</feature>
<feature type="disulfide bond" evidence="10 13">
    <location>
        <begin position="290"/>
        <end position="294"/>
    </location>
</feature>
<feature type="splice variant" id="VSP_053496" description="In isoform 2." evidence="21">
    <location>
        <begin position="315"/>
        <end position="348"/>
    </location>
</feature>
<feature type="sequence variant" id="VAR_083722" description="In IMD51; results in complete loss of expression and loss-of-function." evidence="11">
    <location>
        <begin position="284"/>
        <end position="866"/>
    </location>
</feature>
<feature type="sequence variant" id="VAR_027966" description="In dbSNP:rs879577." evidence="6">
    <original>A</original>
    <variation>V</variation>
    <location>
        <position position="367"/>
    </location>
</feature>
<feature type="sequence variant" id="VAR_049176" description="In dbSNP:rs12484684.">
    <original>P</original>
    <variation>Q</variation>
    <location>
        <position position="562"/>
    </location>
</feature>
<feature type="sequence variant" id="VAR_027967" description="In dbSNP:rs17850765." evidence="6">
    <original>R</original>
    <variation>H</variation>
    <location>
        <position position="580"/>
    </location>
</feature>
<feature type="strand" evidence="27">
    <location>
        <begin position="34"/>
        <end position="36"/>
    </location>
</feature>
<feature type="strand" evidence="27">
    <location>
        <begin position="50"/>
        <end position="55"/>
    </location>
</feature>
<feature type="helix" evidence="28">
    <location>
        <begin position="60"/>
        <end position="63"/>
    </location>
</feature>
<feature type="strand" evidence="27">
    <location>
        <begin position="74"/>
        <end position="84"/>
    </location>
</feature>
<feature type="strand" evidence="25">
    <location>
        <begin position="86"/>
        <end position="88"/>
    </location>
</feature>
<feature type="strand" evidence="27">
    <location>
        <begin position="90"/>
        <end position="101"/>
    </location>
</feature>
<feature type="helix" evidence="28">
    <location>
        <begin position="104"/>
        <end position="108"/>
    </location>
</feature>
<feature type="strand" evidence="27">
    <location>
        <begin position="111"/>
        <end position="118"/>
    </location>
</feature>
<feature type="turn" evidence="27">
    <location>
        <begin position="119"/>
        <end position="121"/>
    </location>
</feature>
<feature type="strand" evidence="27">
    <location>
        <begin position="124"/>
        <end position="131"/>
    </location>
</feature>
<feature type="strand" evidence="27">
    <location>
        <begin position="141"/>
        <end position="150"/>
    </location>
</feature>
<feature type="strand" evidence="27">
    <location>
        <begin position="156"/>
        <end position="164"/>
    </location>
</feature>
<feature type="strand" evidence="27">
    <location>
        <begin position="176"/>
        <end position="181"/>
    </location>
</feature>
<feature type="helix" evidence="27">
    <location>
        <begin position="188"/>
        <end position="191"/>
    </location>
</feature>
<feature type="helix" evidence="27">
    <location>
        <begin position="194"/>
        <end position="198"/>
    </location>
</feature>
<feature type="turn" evidence="27">
    <location>
        <begin position="199"/>
        <end position="202"/>
    </location>
</feature>
<feature type="strand" evidence="27">
    <location>
        <begin position="208"/>
        <end position="212"/>
    </location>
</feature>
<feature type="turn" evidence="27">
    <location>
        <begin position="213"/>
        <end position="215"/>
    </location>
</feature>
<feature type="strand" evidence="27">
    <location>
        <begin position="216"/>
        <end position="222"/>
    </location>
</feature>
<feature type="strand" evidence="27">
    <location>
        <begin position="225"/>
        <end position="227"/>
    </location>
</feature>
<feature type="strand" evidence="27">
    <location>
        <begin position="230"/>
        <end position="237"/>
    </location>
</feature>
<feature type="turn" evidence="29">
    <location>
        <begin position="240"/>
        <end position="242"/>
    </location>
</feature>
<feature type="strand" evidence="27">
    <location>
        <begin position="245"/>
        <end position="252"/>
    </location>
</feature>
<feature type="helix" evidence="27">
    <location>
        <begin position="257"/>
        <end position="259"/>
    </location>
</feature>
<feature type="strand" evidence="27">
    <location>
        <begin position="263"/>
        <end position="269"/>
    </location>
</feature>
<feature type="strand" evidence="27">
    <location>
        <begin position="278"/>
        <end position="285"/>
    </location>
</feature>
<feature type="turn" evidence="27">
    <location>
        <begin position="288"/>
        <end position="292"/>
    </location>
</feature>
<feature type="strand" evidence="27">
    <location>
        <begin position="297"/>
        <end position="301"/>
    </location>
</feature>
<feature type="strand" evidence="26">
    <location>
        <begin position="379"/>
        <end position="383"/>
    </location>
</feature>
<feature type="helix" evidence="26">
    <location>
        <begin position="389"/>
        <end position="406"/>
    </location>
</feature>
<feature type="strand" evidence="26">
    <location>
        <begin position="409"/>
        <end position="411"/>
    </location>
</feature>
<feature type="helix" evidence="26">
    <location>
        <begin position="413"/>
        <end position="416"/>
    </location>
</feature>
<feature type="helix" evidence="26">
    <location>
        <begin position="417"/>
        <end position="422"/>
    </location>
</feature>
<feature type="helix" evidence="26">
    <location>
        <begin position="425"/>
        <end position="438"/>
    </location>
</feature>
<feature type="strand" evidence="26">
    <location>
        <begin position="442"/>
        <end position="446"/>
    </location>
</feature>
<feature type="helix" evidence="26">
    <location>
        <begin position="449"/>
        <end position="458"/>
    </location>
</feature>
<feature type="helix" evidence="26">
    <location>
        <begin position="478"/>
        <end position="486"/>
    </location>
</feature>
<feature type="helix" evidence="26">
    <location>
        <begin position="487"/>
        <end position="491"/>
    </location>
</feature>
<feature type="helix" evidence="26">
    <location>
        <begin position="493"/>
        <end position="498"/>
    </location>
</feature>
<feature type="strand" evidence="26">
    <location>
        <begin position="499"/>
        <end position="504"/>
    </location>
</feature>
<feature type="turn" evidence="26">
    <location>
        <begin position="505"/>
        <end position="507"/>
    </location>
</feature>
<feature type="helix" evidence="26">
    <location>
        <begin position="510"/>
        <end position="512"/>
    </location>
</feature>
<feature type="strand" evidence="26">
    <location>
        <begin position="522"/>
        <end position="525"/>
    </location>
</feature>
<feature type="turn" evidence="26">
    <location>
        <begin position="526"/>
        <end position="528"/>
    </location>
</feature>
<feature type="helix" evidence="26">
    <location>
        <begin position="529"/>
        <end position="537"/>
    </location>
</feature>
<feature type="helix" evidence="26">
    <location>
        <begin position="557"/>
        <end position="560"/>
    </location>
</feature>
<feature type="helix" evidence="26">
    <location>
        <begin position="564"/>
        <end position="580"/>
    </location>
</feature>
<feature type="helix" evidence="26">
    <location>
        <begin position="584"/>
        <end position="588"/>
    </location>
</feature>
<gene>
    <name evidence="23" type="primary">IL17RA</name>
    <name type="synonym">IL17R</name>
</gene>
<dbReference type="EMBL" id="U58917">
    <property type="protein sequence ID" value="AAB99730.1"/>
    <property type="molecule type" value="mRNA"/>
</dbReference>
<dbReference type="EMBL" id="CT841520">
    <property type="protein sequence ID" value="CAJ86450.1"/>
    <property type="molecule type" value="mRNA"/>
</dbReference>
<dbReference type="EMBL" id="CH471193">
    <property type="protein sequence ID" value="EAW57739.1"/>
    <property type="molecule type" value="Genomic_DNA"/>
</dbReference>
<dbReference type="EMBL" id="BC011624">
    <property type="protein sequence ID" value="AAH11624.1"/>
    <property type="molecule type" value="mRNA"/>
</dbReference>
<dbReference type="EMBL" id="BX368715">
    <property type="status" value="NOT_ANNOTATED_CDS"/>
    <property type="molecule type" value="mRNA"/>
</dbReference>
<dbReference type="CCDS" id="CCDS13739.1">
    <molecule id="Q96F46-1"/>
</dbReference>
<dbReference type="CCDS" id="CCDS77645.1">
    <molecule id="Q96F46-2"/>
</dbReference>
<dbReference type="RefSeq" id="NP_001276834.1">
    <molecule id="Q96F46-2"/>
    <property type="nucleotide sequence ID" value="NM_001289905.2"/>
</dbReference>
<dbReference type="RefSeq" id="NP_055154.3">
    <molecule id="Q96F46-1"/>
    <property type="nucleotide sequence ID" value="NM_014339.6"/>
</dbReference>
<dbReference type="PDB" id="3JVF">
    <property type="method" value="X-ray"/>
    <property type="resolution" value="3.30 A"/>
    <property type="chains" value="C=32-317"/>
</dbReference>
<dbReference type="PDB" id="4HSA">
    <property type="method" value="X-ray"/>
    <property type="resolution" value="3.15 A"/>
    <property type="chains" value="C/F=32-317"/>
</dbReference>
<dbReference type="PDB" id="4NUX">
    <property type="method" value="X-ray"/>
    <property type="resolution" value="2.30 A"/>
    <property type="chains" value="A=376-591"/>
</dbReference>
<dbReference type="PDB" id="5N9B">
    <property type="method" value="X-ray"/>
    <property type="resolution" value="1.90 A"/>
    <property type="chains" value="A=33-318"/>
</dbReference>
<dbReference type="PDB" id="5NAN">
    <property type="method" value="X-ray"/>
    <property type="resolution" value="3.30 A"/>
    <property type="chains" value="B/C=33-320"/>
</dbReference>
<dbReference type="PDB" id="7UWL">
    <property type="method" value="EM"/>
    <property type="resolution" value="3.70 A"/>
    <property type="chains" value="E/F=33-317"/>
</dbReference>
<dbReference type="PDB" id="7UWM">
    <property type="method" value="EM"/>
    <property type="resolution" value="2.50 A"/>
    <property type="chains" value="C/F=33-304"/>
</dbReference>
<dbReference type="PDB" id="7UWN">
    <property type="method" value="EM"/>
    <property type="resolution" value="3.01 A"/>
    <property type="chains" value="C/F=33-317"/>
</dbReference>
<dbReference type="PDB" id="7ZAN">
    <property type="method" value="X-ray"/>
    <property type="resolution" value="5.06 A"/>
    <property type="chains" value="C=33-320"/>
</dbReference>
<dbReference type="PDBsum" id="3JVF"/>
<dbReference type="PDBsum" id="4HSA"/>
<dbReference type="PDBsum" id="4NUX"/>
<dbReference type="PDBsum" id="5N9B"/>
<dbReference type="PDBsum" id="5NAN"/>
<dbReference type="PDBsum" id="7UWL"/>
<dbReference type="PDBsum" id="7UWM"/>
<dbReference type="PDBsum" id="7UWN"/>
<dbReference type="PDBsum" id="7ZAN"/>
<dbReference type="EMDB" id="EMD-26835"/>
<dbReference type="EMDB" id="EMD-26836"/>
<dbReference type="EMDB" id="EMD-26837"/>
<dbReference type="SMR" id="Q96F46"/>
<dbReference type="BioGRID" id="117265">
    <property type="interactions" value="218"/>
</dbReference>
<dbReference type="ComplexPortal" id="CPX-8776">
    <property type="entry name" value="Interleukin-17A-F receptor-ligand complex"/>
</dbReference>
<dbReference type="ComplexPortal" id="CPX-9201">
    <property type="entry name" value="Interleukin-17A receptor-ligand complex"/>
</dbReference>
<dbReference type="ComplexPortal" id="CPX-9202">
    <property type="entry name" value="Interleukin-17F receptor-ligand complex"/>
</dbReference>
<dbReference type="ComplexPortal" id="CPX-9204">
    <property type="entry name" value="Interleukin-25 receptor-ligand complex"/>
</dbReference>
<dbReference type="ComplexPortal" id="CPX-9206">
    <property type="entry name" value="Interleukin-17B receptor-ligand complex"/>
</dbReference>
<dbReference type="ComplexPortal" id="CPX-9207">
    <property type="entry name" value="Interleukin-17C receptor-ligand complex"/>
</dbReference>
<dbReference type="CORUM" id="Q96F46"/>
<dbReference type="FunCoup" id="Q96F46">
    <property type="interactions" value="1128"/>
</dbReference>
<dbReference type="IntAct" id="Q96F46">
    <property type="interactions" value="147"/>
</dbReference>
<dbReference type="STRING" id="9606.ENSP00000320936"/>
<dbReference type="BindingDB" id="Q96F46"/>
<dbReference type="ChEMBL" id="CHEMBL3580485"/>
<dbReference type="DrugBank" id="DB11776">
    <property type="generic name" value="Brodalumab"/>
</dbReference>
<dbReference type="DrugCentral" id="Q96F46"/>
<dbReference type="GuidetoPHARMACOLOGY" id="1738"/>
<dbReference type="GlyCosmos" id="Q96F46">
    <property type="glycosylation" value="7 sites, No reported glycans"/>
</dbReference>
<dbReference type="GlyGen" id="Q96F46">
    <property type="glycosylation" value="8 sites, 10 N-linked glycans (4 sites), 1 O-linked glycan (1 site)"/>
</dbReference>
<dbReference type="iPTMnet" id="Q96F46"/>
<dbReference type="PhosphoSitePlus" id="Q96F46"/>
<dbReference type="BioMuta" id="IL17RA"/>
<dbReference type="DMDM" id="116242517"/>
<dbReference type="jPOST" id="Q96F46"/>
<dbReference type="MassIVE" id="Q96F46"/>
<dbReference type="PaxDb" id="9606-ENSP00000320936"/>
<dbReference type="PeptideAtlas" id="Q96F46"/>
<dbReference type="ProteomicsDB" id="76496">
    <molecule id="Q96F46-1"/>
</dbReference>
<dbReference type="Pumba" id="Q96F46"/>
<dbReference type="ABCD" id="Q96F46">
    <property type="antibodies" value="25 sequenced antibodies"/>
</dbReference>
<dbReference type="Antibodypedia" id="22632">
    <property type="antibodies" value="815 antibodies from 45 providers"/>
</dbReference>
<dbReference type="DNASU" id="23765"/>
<dbReference type="Ensembl" id="ENST00000319363.11">
    <molecule id="Q96F46-1"/>
    <property type="protein sequence ID" value="ENSP00000320936.6"/>
    <property type="gene ID" value="ENSG00000177663.15"/>
</dbReference>
<dbReference type="Ensembl" id="ENST00000612619.2">
    <molecule id="Q96F46-2"/>
    <property type="protein sequence ID" value="ENSP00000479970.1"/>
    <property type="gene ID" value="ENSG00000177663.15"/>
</dbReference>
<dbReference type="GeneID" id="23765"/>
<dbReference type="KEGG" id="hsa:23765"/>
<dbReference type="MANE-Select" id="ENST00000319363.11">
    <property type="protein sequence ID" value="ENSP00000320936.6"/>
    <property type="RefSeq nucleotide sequence ID" value="NM_014339.7"/>
    <property type="RefSeq protein sequence ID" value="NP_055154.3"/>
</dbReference>
<dbReference type="UCSC" id="uc002zly.5">
    <molecule id="Q96F46-1"/>
    <property type="organism name" value="human"/>
</dbReference>
<dbReference type="AGR" id="HGNC:5985"/>
<dbReference type="CTD" id="23765"/>
<dbReference type="DisGeNET" id="23765"/>
<dbReference type="GeneCards" id="IL17RA"/>
<dbReference type="HGNC" id="HGNC:5985">
    <property type="gene designation" value="IL17RA"/>
</dbReference>
<dbReference type="HPA" id="ENSG00000177663">
    <property type="expression patterns" value="Tissue enhanced (bone)"/>
</dbReference>
<dbReference type="MalaCards" id="IL17RA"/>
<dbReference type="MIM" id="605461">
    <property type="type" value="gene"/>
</dbReference>
<dbReference type="MIM" id="613953">
    <property type="type" value="phenotype"/>
</dbReference>
<dbReference type="neXtProt" id="NX_Q96F46"/>
<dbReference type="OpenTargets" id="ENSG00000177663"/>
<dbReference type="Orphanet" id="1334">
    <property type="disease" value="Chronic mucocutaneous candidiasis"/>
</dbReference>
<dbReference type="PharmGKB" id="PA29801"/>
<dbReference type="VEuPathDB" id="HostDB:ENSG00000177663"/>
<dbReference type="eggNOG" id="ENOG502QV5J">
    <property type="taxonomic scope" value="Eukaryota"/>
</dbReference>
<dbReference type="GeneTree" id="ENSGT00940000159018"/>
<dbReference type="HOGENOM" id="CLU_018087_0_0_1"/>
<dbReference type="InParanoid" id="Q96F46"/>
<dbReference type="OMA" id="EPGRIHQ"/>
<dbReference type="OrthoDB" id="5915222at2759"/>
<dbReference type="PAN-GO" id="Q96F46">
    <property type="GO annotations" value="1 GO annotation based on evolutionary models"/>
</dbReference>
<dbReference type="PhylomeDB" id="Q96F46"/>
<dbReference type="TreeFam" id="TF329644"/>
<dbReference type="PathwayCommons" id="Q96F46"/>
<dbReference type="Reactome" id="R-HSA-448424">
    <property type="pathway name" value="Interleukin-17 signaling"/>
</dbReference>
<dbReference type="Reactome" id="R-HSA-9705671">
    <property type="pathway name" value="SARS-CoV-2 activates/modulates innate and adaptive immune responses"/>
</dbReference>
<dbReference type="SignaLink" id="Q96F46"/>
<dbReference type="SIGNOR" id="Q96F46"/>
<dbReference type="BioGRID-ORCS" id="23765">
    <property type="hits" value="13 hits in 1179 CRISPR screens"/>
</dbReference>
<dbReference type="ChiTaRS" id="IL17RA">
    <property type="organism name" value="human"/>
</dbReference>
<dbReference type="EvolutionaryTrace" id="Q96F46"/>
<dbReference type="GeneWiki" id="IL17RA"/>
<dbReference type="GenomeRNAi" id="23765"/>
<dbReference type="Pharos" id="Q96F46">
    <property type="development level" value="Tclin"/>
</dbReference>
<dbReference type="PRO" id="PR:Q96F46"/>
<dbReference type="Proteomes" id="UP000005640">
    <property type="component" value="Chromosome 22"/>
</dbReference>
<dbReference type="RNAct" id="Q96F46">
    <property type="molecule type" value="protein"/>
</dbReference>
<dbReference type="Bgee" id="ENSG00000177663">
    <property type="expression patterns" value="Expressed in blood and 191 other cell types or tissues"/>
</dbReference>
<dbReference type="GO" id="GO:0005576">
    <property type="term" value="C:extracellular region"/>
    <property type="evidence" value="ECO:0007669"/>
    <property type="project" value="UniProtKB-SubCell"/>
</dbReference>
<dbReference type="GO" id="GO:0005886">
    <property type="term" value="C:plasma membrane"/>
    <property type="evidence" value="ECO:0000304"/>
    <property type="project" value="Reactome"/>
</dbReference>
<dbReference type="GO" id="GO:0030368">
    <property type="term" value="F:interleukin-17 receptor activity"/>
    <property type="evidence" value="ECO:0000314"/>
    <property type="project" value="UniProtKB"/>
</dbReference>
<dbReference type="GO" id="GO:0005102">
    <property type="term" value="F:signaling receptor binding"/>
    <property type="evidence" value="ECO:0007669"/>
    <property type="project" value="Ensembl"/>
</dbReference>
<dbReference type="GO" id="GO:0007166">
    <property type="term" value="P:cell surface receptor signaling pathway"/>
    <property type="evidence" value="ECO:0000303"/>
    <property type="project" value="UniProtKB"/>
</dbReference>
<dbReference type="GO" id="GO:0050832">
    <property type="term" value="P:defense response to fungus"/>
    <property type="evidence" value="ECO:0007669"/>
    <property type="project" value="Ensembl"/>
</dbReference>
<dbReference type="GO" id="GO:0072537">
    <property type="term" value="P:fibroblast activation"/>
    <property type="evidence" value="ECO:0000314"/>
    <property type="project" value="BHF-UCL"/>
</dbReference>
<dbReference type="GO" id="GO:0071621">
    <property type="term" value="P:granulocyte chemotaxis"/>
    <property type="evidence" value="ECO:0007669"/>
    <property type="project" value="Ensembl"/>
</dbReference>
<dbReference type="GO" id="GO:0006954">
    <property type="term" value="P:inflammatory response"/>
    <property type="evidence" value="ECO:0007669"/>
    <property type="project" value="UniProtKB-KW"/>
</dbReference>
<dbReference type="GO" id="GO:0045087">
    <property type="term" value="P:innate immune response"/>
    <property type="evidence" value="ECO:0007669"/>
    <property type="project" value="UniProtKB-KW"/>
</dbReference>
<dbReference type="GO" id="GO:0097400">
    <property type="term" value="P:interleukin-17-mediated signaling pathway"/>
    <property type="evidence" value="ECO:0000314"/>
    <property type="project" value="UniProtKB"/>
</dbReference>
<dbReference type="GO" id="GO:0038173">
    <property type="term" value="P:interleukin-17A-mediated signaling pathway"/>
    <property type="evidence" value="ECO:0000314"/>
    <property type="project" value="UniProt"/>
</dbReference>
<dbReference type="GO" id="GO:2000340">
    <property type="term" value="P:positive regulation of chemokine (C-X-C motif) ligand 1 production"/>
    <property type="evidence" value="ECO:0000315"/>
    <property type="project" value="UniProtKB"/>
</dbReference>
<dbReference type="GO" id="GO:1900017">
    <property type="term" value="P:positive regulation of cytokine production involved in inflammatory response"/>
    <property type="evidence" value="ECO:0000314"/>
    <property type="project" value="UniProtKB"/>
</dbReference>
<dbReference type="GO" id="GO:0050729">
    <property type="term" value="P:positive regulation of inflammatory response"/>
    <property type="evidence" value="ECO:0000314"/>
    <property type="project" value="UniProtKB"/>
</dbReference>
<dbReference type="GO" id="GO:0032736">
    <property type="term" value="P:positive regulation of interleukin-13 production"/>
    <property type="evidence" value="ECO:0007669"/>
    <property type="project" value="Ensembl"/>
</dbReference>
<dbReference type="GO" id="GO:0032747">
    <property type="term" value="P:positive regulation of interleukin-23 production"/>
    <property type="evidence" value="ECO:0000314"/>
    <property type="project" value="BHF-UCL"/>
</dbReference>
<dbReference type="GO" id="GO:0032754">
    <property type="term" value="P:positive regulation of interleukin-5 production"/>
    <property type="evidence" value="ECO:0007669"/>
    <property type="project" value="Ensembl"/>
</dbReference>
<dbReference type="GO" id="GO:0032755">
    <property type="term" value="P:positive regulation of interleukin-6 production"/>
    <property type="evidence" value="ECO:0000315"/>
    <property type="project" value="UniProtKB"/>
</dbReference>
<dbReference type="GO" id="GO:0030163">
    <property type="term" value="P:protein catabolic process"/>
    <property type="evidence" value="ECO:0007669"/>
    <property type="project" value="Ensembl"/>
</dbReference>
<dbReference type="GO" id="GO:0009615">
    <property type="term" value="P:response to virus"/>
    <property type="evidence" value="ECO:0000314"/>
    <property type="project" value="UniProtKB"/>
</dbReference>
<dbReference type="GO" id="GO:0072538">
    <property type="term" value="P:T-helper 17 type immune response"/>
    <property type="evidence" value="ECO:0007669"/>
    <property type="project" value="Ensembl"/>
</dbReference>
<dbReference type="FunFam" id="2.60.40.2150:FF:000002">
    <property type="entry name" value="Interleukin 17 receptor A"/>
    <property type="match status" value="1"/>
</dbReference>
<dbReference type="FunFam" id="2.60.40.2160:FF:000001">
    <property type="entry name" value="Interleukin 17 receptor A"/>
    <property type="match status" value="1"/>
</dbReference>
<dbReference type="FunFam" id="3.40.50.11530:FF:000002">
    <property type="entry name" value="Interleukin 17 receptor A"/>
    <property type="match status" value="1"/>
</dbReference>
<dbReference type="Gene3D" id="3.40.50.11530">
    <property type="match status" value="1"/>
</dbReference>
<dbReference type="Gene3D" id="2.60.40.2160">
    <property type="entry name" value="Interleukin-17 receptor A/B, fibronectin-III-like domain 1"/>
    <property type="match status" value="1"/>
</dbReference>
<dbReference type="Gene3D" id="2.60.40.2150">
    <property type="entry name" value="Interleukin-17 receptor A/B, fibronectin-III-like domain 2"/>
    <property type="match status" value="1"/>
</dbReference>
<dbReference type="InterPro" id="IPR039465">
    <property type="entry name" value="IL-17_rcpt-like"/>
</dbReference>
<dbReference type="InterPro" id="IPR032356">
    <property type="entry name" value="IL17R_fnIII_D1"/>
</dbReference>
<dbReference type="InterPro" id="IPR038683">
    <property type="entry name" value="IL17RA/B_FnIII-like_1_sf"/>
</dbReference>
<dbReference type="InterPro" id="IPR043046">
    <property type="entry name" value="IL17RA/B_FnIII-like_2_sf"/>
</dbReference>
<dbReference type="InterPro" id="IPR013568">
    <property type="entry name" value="SEFIR_dom"/>
</dbReference>
<dbReference type="PANTHER" id="PTHR15583">
    <property type="entry name" value="INTERLEUKIN-17 RECEPTOR"/>
    <property type="match status" value="1"/>
</dbReference>
<dbReference type="PANTHER" id="PTHR15583:SF13">
    <property type="entry name" value="INTERLEUKIN-17 RECEPTOR A"/>
    <property type="match status" value="1"/>
</dbReference>
<dbReference type="Pfam" id="PF16556">
    <property type="entry name" value="IL17R_fnIII_D1"/>
    <property type="match status" value="1"/>
</dbReference>
<dbReference type="Pfam" id="PF16578">
    <property type="entry name" value="IL17R_fnIII_D2"/>
    <property type="match status" value="1"/>
</dbReference>
<dbReference type="Pfam" id="PF08357">
    <property type="entry name" value="SEFIR"/>
    <property type="match status" value="1"/>
</dbReference>
<dbReference type="PROSITE" id="PS51534">
    <property type="entry name" value="SEFIR"/>
    <property type="match status" value="1"/>
</dbReference>
<protein>
    <recommendedName>
        <fullName evidence="22">Interleukin-17 receptor A</fullName>
        <shortName>IL-17 receptor A</shortName>
        <shortName>IL-17RA</shortName>
    </recommendedName>
    <alternativeName>
        <fullName>CDw217</fullName>
    </alternativeName>
    <cdAntigenName>CD217</cdAntigenName>
</protein>
<name>I17RA_HUMAN</name>
<accession>Q96F46</accession>
<accession>O43844</accession>
<accession>Q20WK1</accession>
<reference key="1">
    <citation type="journal article" date="1997" name="Cytokine">
        <title>Molecular characterization of the human interleukin (Il)-17 receptor.</title>
        <authorList>
            <person name="Yao Z."/>
            <person name="Spriggs M.K."/>
            <person name="Derry J.M.J."/>
            <person name="Strockbine L."/>
            <person name="Park L.S."/>
            <person name="Vanden Bos T."/>
            <person name="Zappone J."/>
            <person name="Painter S.L."/>
            <person name="Armitage R.J."/>
        </authorList>
    </citation>
    <scope>NUCLEOTIDE SEQUENCE [MRNA] (ISOFORM 1)</scope>
    <scope>FUNCTION</scope>
    <source>
        <tissue>T-cell</tissue>
    </source>
</reference>
<reference key="2">
    <citation type="journal article" date="2004" name="Genome Biol.">
        <title>A genome annotation-driven approach to cloning the human ORFeome.</title>
        <authorList>
            <person name="Collins J.E."/>
            <person name="Wright C.L."/>
            <person name="Edwards C.A."/>
            <person name="Davis M.P."/>
            <person name="Grinham J.A."/>
            <person name="Cole C.G."/>
            <person name="Goward M.E."/>
            <person name="Aguado B."/>
            <person name="Mallya M."/>
            <person name="Mokrab Y."/>
            <person name="Huckle E.J."/>
            <person name="Beare D.M."/>
            <person name="Dunham I."/>
        </authorList>
    </citation>
    <scope>NUCLEOTIDE SEQUENCE [LARGE SCALE MRNA] (ISOFORM 1)</scope>
</reference>
<reference key="3">
    <citation type="submission" date="2005-07" db="EMBL/GenBank/DDBJ databases">
        <authorList>
            <person name="Mural R.J."/>
            <person name="Istrail S."/>
            <person name="Sutton G.G."/>
            <person name="Florea L."/>
            <person name="Halpern A.L."/>
            <person name="Mobarry C.M."/>
            <person name="Lippert R."/>
            <person name="Walenz B."/>
            <person name="Shatkay H."/>
            <person name="Dew I."/>
            <person name="Miller J.R."/>
            <person name="Flanigan M.J."/>
            <person name="Edwards N.J."/>
            <person name="Bolanos R."/>
            <person name="Fasulo D."/>
            <person name="Halldorsson B.V."/>
            <person name="Hannenhalli S."/>
            <person name="Turner R."/>
            <person name="Yooseph S."/>
            <person name="Lu F."/>
            <person name="Nusskern D.R."/>
            <person name="Shue B.C."/>
            <person name="Zheng X.H."/>
            <person name="Zhong F."/>
            <person name="Delcher A.L."/>
            <person name="Huson D.H."/>
            <person name="Kravitz S.A."/>
            <person name="Mouchard L."/>
            <person name="Reinert K."/>
            <person name="Remington K.A."/>
            <person name="Clark A.G."/>
            <person name="Waterman M.S."/>
            <person name="Eichler E.E."/>
            <person name="Adams M.D."/>
            <person name="Hunkapiller M.W."/>
            <person name="Myers E.W."/>
            <person name="Venter J.C."/>
        </authorList>
    </citation>
    <scope>NUCLEOTIDE SEQUENCE [LARGE SCALE GENOMIC DNA]</scope>
</reference>
<reference key="4">
    <citation type="journal article" date="2004" name="Genome Res.">
        <title>The status, quality, and expansion of the NIH full-length cDNA project: the Mammalian Gene Collection (MGC).</title>
        <authorList>
            <consortium name="The MGC Project Team"/>
        </authorList>
    </citation>
    <scope>NUCLEOTIDE SEQUENCE [LARGE SCALE MRNA] (ISOFORM 1)</scope>
    <scope>VARIANTS VAL-367 AND HIS-580</scope>
    <source>
        <tissue>Uterus</tissue>
    </source>
</reference>
<reference key="5">
    <citation type="journal article" date="2004" name="Protein Sci.">
        <title>Signal peptide prediction based on analysis of experimentally verified cleavage sites.</title>
        <authorList>
            <person name="Zhang Z."/>
            <person name="Henzel W.J."/>
        </authorList>
    </citation>
    <scope>PROTEIN SEQUENCE OF 33-47</scope>
</reference>
<reference key="6">
    <citation type="submission" date="2003-04" db="EMBL/GenBank/DDBJ databases">
        <title>Full-length cDNA libraries and normalization.</title>
        <authorList>
            <person name="Li W.B."/>
            <person name="Gruber C."/>
            <person name="Jessee J."/>
            <person name="Polayes D."/>
        </authorList>
    </citation>
    <scope>NUCLEOTIDE SEQUENCE [LARGE SCALE MRNA] OF 237-431 (ISOFORM 2)</scope>
    <source>
        <tissue>Placenta</tissue>
    </source>
</reference>
<reference key="7">
    <citation type="journal article" date="2006" name="J. Immunol.">
        <title>Interleukin 17 signals through a heteromeric receptor complex.</title>
        <authorList>
            <person name="Toy D."/>
            <person name="Kugler D."/>
            <person name="Wolfson M."/>
            <person name="Vanden Bos T."/>
            <person name="Gurgel J."/>
            <person name="Derry J."/>
            <person name="Tocker J."/>
            <person name="Peschon J."/>
        </authorList>
    </citation>
    <scope>FUNCTION</scope>
    <scope>SUBUNIT</scope>
</reference>
<reference key="8">
    <citation type="journal article" date="2007" name="J. Immunol.">
        <title>Identification of the IL-17 receptor related molecule IL-17RC as the receptor for IL-17F.</title>
        <authorList>
            <person name="Kuestner R.E."/>
            <person name="Taft D.W."/>
            <person name="Haran A."/>
            <person name="Brandt C.S."/>
            <person name="Brender T."/>
            <person name="Lum K."/>
            <person name="Harder B."/>
            <person name="Okada S."/>
            <person name="Ostrander C.D."/>
            <person name="Kreindler J.L."/>
            <person name="Aujla S.J."/>
            <person name="Reardon B."/>
            <person name="Moore M."/>
            <person name="Shea P."/>
            <person name="Schreckhise R."/>
            <person name="Bukowski T.R."/>
            <person name="Presnell S."/>
            <person name="Guerra-Lewis P."/>
            <person name="Parrish-Novak J."/>
            <person name="Ellsworth J.L."/>
            <person name="Jaspers S."/>
            <person name="Lewis K.E."/>
            <person name="Appleby M."/>
            <person name="Kolls J.K."/>
            <person name="Rixon M."/>
            <person name="West J.W."/>
            <person name="Gao Z."/>
            <person name="Levin S.D."/>
        </authorList>
    </citation>
    <scope>FUNCTION</scope>
    <scope>SUBCELLULAR LOCATION</scope>
</reference>
<reference key="9">
    <citation type="journal article" date="2008" name="J. Immunol.">
        <title>The human IL-17F/IL-17A heterodimeric cytokine signals through the IL-17RA/IL-17RC receptor complex.</title>
        <authorList>
            <person name="Wright J.F."/>
            <person name="Bennett F."/>
            <person name="Li B."/>
            <person name="Brooks J."/>
            <person name="Luxenberg D.P."/>
            <person name="Whitters M.J."/>
            <person name="Tomkinson K.N."/>
            <person name="Fitz L.J."/>
            <person name="Wolfman N.M."/>
            <person name="Collins M."/>
            <person name="Dunussi-Joannopoulos K."/>
            <person name="Chatterjee-Kishore M."/>
            <person name="Carreno B.M."/>
        </authorList>
    </citation>
    <scope>FUNCTION</scope>
    <scope>SUBUNIT</scope>
</reference>
<reference key="10">
    <citation type="journal article" date="2011" name="Nat. Immunol.">
        <title>IL-17C regulates the innate immune function of epithelial cells in an autocrine manner.</title>
        <authorList>
            <person name="Ramirez-Carrozzi V."/>
            <person name="Sambandam A."/>
            <person name="Luis E."/>
            <person name="Lin Z."/>
            <person name="Jeet S."/>
            <person name="Lesch J."/>
            <person name="Hackney J."/>
            <person name="Kim J."/>
            <person name="Zhou M."/>
            <person name="Lai J."/>
            <person name="Modrusan Z."/>
            <person name="Sai T."/>
            <person name="Lee W."/>
            <person name="Xu M."/>
            <person name="Caplazi P."/>
            <person name="Diehl L."/>
            <person name="de Voss J."/>
            <person name="Balazs M."/>
            <person name="Gonzalez L. Jr."/>
            <person name="Singh H."/>
            <person name="Ouyang W."/>
            <person name="Pappu R."/>
        </authorList>
    </citation>
    <scope>FUNCTION</scope>
    <scope>IDENTIFICATION AS IL17C CORECEPTOR</scope>
    <scope>INTERACTION WITH IL17RE</scope>
    <scope>TISSUE SPECIFICITY</scope>
</reference>
<reference key="11">
    <citation type="journal article" date="2013" name="Cytokine">
        <title>Identification of a soluble isoform of human IL-17RA generated by alternative splicing.</title>
        <authorList>
            <person name="Sohda M."/>
            <person name="Misumi Y."/>
            <person name="Tashiro K."/>
            <person name="Yamazaki M."/>
            <person name="Saku T."/>
            <person name="Oda K."/>
        </authorList>
    </citation>
    <scope>ALTERNATIVE SPLICING</scope>
    <scope>SUBCELLULAR LOCATION</scope>
</reference>
<reference key="12">
    <citation type="journal article" date="2013" name="Immunity">
        <title>An ACT1 mutation selectively abolishes interleukin-17 responses in humans with chronic mucocutaneous candidiasis.</title>
        <authorList>
            <person name="Boisson B."/>
            <person name="Wang C."/>
            <person name="Pedergnana V."/>
            <person name="Wu L."/>
            <person name="Cypowyj S."/>
            <person name="Rybojad M."/>
            <person name="Belkadi A."/>
            <person name="Picard C."/>
            <person name="Abel L."/>
            <person name="Fieschi C."/>
            <person name="Puel A."/>
            <person name="Li X."/>
            <person name="Casanova J.L."/>
        </authorList>
    </citation>
    <scope>FUNCTION</scope>
    <scope>INTERACTION WITH TRAF3IP2</scope>
</reference>
<reference key="13">
    <citation type="journal article" date="2013" name="J. Proteome Res.">
        <title>Toward a comprehensive characterization of a human cancer cell phosphoproteome.</title>
        <authorList>
            <person name="Zhou H."/>
            <person name="Di Palma S."/>
            <person name="Preisinger C."/>
            <person name="Peng M."/>
            <person name="Polat A.N."/>
            <person name="Heck A.J."/>
            <person name="Mohammed S."/>
        </authorList>
    </citation>
    <scope>PHOSPHORYLATION [LARGE SCALE ANALYSIS] AT SER-708</scope>
    <scope>IDENTIFICATION BY MASS SPECTROMETRY [LARGE SCALE ANALYSIS]</scope>
    <source>
        <tissue>Cervix carcinoma</tissue>
        <tissue>Erythroleukemia</tissue>
    </source>
</reference>
<reference key="14">
    <citation type="journal article" date="2020" name="Immunity">
        <title>Structural Analysis Reveals that the Cytokine IL-17F Forms a Homodimeric Complex with Receptor IL-17RC to Drive IL-17RA-Independent Signaling.</title>
        <authorList>
            <person name="Goepfert A."/>
            <person name="Lehmann S."/>
            <person name="Blank J."/>
            <person name="Kolbinger F."/>
            <person name="Rondeau J.M."/>
        </authorList>
    </citation>
    <scope>INTERACTION WITH IL17RC; IL17A AND IL17F</scope>
</reference>
<reference key="15">
    <citation type="journal article" date="2020" name="Science">
        <title>Comparative host-coronavirus protein interaction networks reveal pan-viral disease mechanisms.</title>
        <authorList>
            <consortium name="QCRG Structural Biology Consortium"/>
            <consortium name="Zoonomia Consortium"/>
            <person name="Gordon D.E."/>
            <person name="Hiatt J."/>
            <person name="Bouhaddou M."/>
            <person name="Rezelj V.V."/>
            <person name="Ulferts S."/>
            <person name="Braberg H."/>
            <person name="Jureka A.S."/>
            <person name="Obernier K."/>
            <person name="Guo J.Z."/>
            <person name="Batra J."/>
            <person name="Kaake R.M."/>
            <person name="Weckstein A.R."/>
            <person name="Owens T.W."/>
            <person name="Gupta M."/>
            <person name="Pourmal S."/>
            <person name="Titus E.W."/>
            <person name="Cakir M."/>
            <person name="Soucheray M."/>
            <person name="McGregor M."/>
            <person name="Cakir Z."/>
            <person name="Jang G."/>
            <person name="O'Meara M.J."/>
            <person name="Tummino T.A."/>
            <person name="Zhang Z."/>
            <person name="Foussard H."/>
            <person name="Rojc A."/>
            <person name="Zhou Y."/>
            <person name="Kuchenov D."/>
            <person name="Huettenhain R."/>
            <person name="Xu J."/>
            <person name="Eckhardt M."/>
            <person name="Swaney D.L."/>
            <person name="Fabius J.M."/>
            <person name="Ummadi M."/>
            <person name="Tutuncuoglu B."/>
            <person name="Rathore U."/>
            <person name="Modak M."/>
            <person name="Haas P."/>
            <person name="Haas K.M."/>
            <person name="Naing Z.Z.C."/>
            <person name="Pulido E.H."/>
            <person name="Shi Y."/>
            <person name="Barrio-Hernandez I."/>
            <person name="Memon D."/>
            <person name="Petsalaki E."/>
            <person name="Dunham A."/>
            <person name="Marrero M.C."/>
            <person name="Burke D."/>
            <person name="Koh C."/>
            <person name="Vallet T."/>
            <person name="Silvas J.A."/>
            <person name="Azumaya C.M."/>
            <person name="Billesboelle C."/>
            <person name="Brilot A.F."/>
            <person name="Campbell M.G."/>
            <person name="Diallo A."/>
            <person name="Dickinson M.S."/>
            <person name="Diwanji D."/>
            <person name="Herrera N."/>
            <person name="Hoppe N."/>
            <person name="Kratochvil H.T."/>
            <person name="Liu Y."/>
            <person name="Merz G.E."/>
            <person name="Moritz M."/>
            <person name="Nguyen H.C."/>
            <person name="Nowotny C."/>
            <person name="Puchades C."/>
            <person name="Rizo A.N."/>
            <person name="Schulze-Gahmen U."/>
            <person name="Smith A.M."/>
            <person name="Sun M."/>
            <person name="Young I.D."/>
            <person name="Zhao J."/>
            <person name="Asarnow D."/>
            <person name="Biel J."/>
            <person name="Bowen A."/>
            <person name="Braxton J.R."/>
            <person name="Chen J."/>
            <person name="Chio C.M."/>
            <person name="Chio U.S."/>
            <person name="Deshpande I."/>
            <person name="Doan L."/>
            <person name="Faust B."/>
            <person name="Flores S."/>
            <person name="Jin M."/>
            <person name="Kim K."/>
            <person name="Lam V.L."/>
            <person name="Li F."/>
            <person name="Li J."/>
            <person name="Li Y.L."/>
            <person name="Li Y."/>
            <person name="Liu X."/>
            <person name="Lo M."/>
            <person name="Lopez K.E."/>
            <person name="Melo A.A."/>
            <person name="Moss F.R. III"/>
            <person name="Nguyen P."/>
            <person name="Paulino J."/>
            <person name="Pawar K.I."/>
            <person name="Peters J.K."/>
            <person name="Pospiech T.H. Jr."/>
            <person name="Safari M."/>
            <person name="Sangwan S."/>
            <person name="Schaefer K."/>
            <person name="Thomas P.V."/>
            <person name="Thwin A.C."/>
            <person name="Trenker R."/>
            <person name="Tse E."/>
            <person name="Tsui T.K.M."/>
            <person name="Wang F."/>
            <person name="Whitis N."/>
            <person name="Yu Z."/>
            <person name="Zhang K."/>
            <person name="Zhang Y."/>
            <person name="Zhou F."/>
            <person name="Saltzberg D."/>
            <person name="Hodder A.J."/>
            <person name="Shun-Shion A.S."/>
            <person name="Williams D.M."/>
            <person name="White K.M."/>
            <person name="Rosales R."/>
            <person name="Kehrer T."/>
            <person name="Miorin L."/>
            <person name="Moreno E."/>
            <person name="Patel A.H."/>
            <person name="Rihn S."/>
            <person name="Khalid M.M."/>
            <person name="Vallejo-Gracia A."/>
            <person name="Fozouni P."/>
            <person name="Simoneau C.R."/>
            <person name="Roth T.L."/>
            <person name="Wu D."/>
            <person name="Karim M.A."/>
            <person name="Ghoussaini M."/>
            <person name="Dunham I."/>
            <person name="Berardi F."/>
            <person name="Weigang S."/>
            <person name="Chazal M."/>
            <person name="Park J."/>
            <person name="Logue J."/>
            <person name="McGrath M."/>
            <person name="Weston S."/>
            <person name="Haupt R."/>
            <person name="Hastie C.J."/>
            <person name="Elliott M."/>
            <person name="Brown F."/>
            <person name="Burness K.A."/>
            <person name="Reid E."/>
            <person name="Dorward M."/>
            <person name="Johnson C."/>
            <person name="Wilkinson S.G."/>
            <person name="Geyer A."/>
            <person name="Giesel D.M."/>
            <person name="Baillie C."/>
            <person name="Raggett S."/>
            <person name="Leech H."/>
            <person name="Toth R."/>
            <person name="Goodman N."/>
            <person name="Keough K.C."/>
            <person name="Lind A.L."/>
            <person name="Klesh R.J."/>
            <person name="Hemphill K.R."/>
            <person name="Carlson-Stevermer J."/>
            <person name="Oki J."/>
            <person name="Holden K."/>
            <person name="Maures T."/>
            <person name="Pollard K.S."/>
            <person name="Sali A."/>
            <person name="Agard D.A."/>
            <person name="Cheng Y."/>
            <person name="Fraser J.S."/>
            <person name="Frost A."/>
            <person name="Jura N."/>
            <person name="Kortemme T."/>
            <person name="Manglik A."/>
            <person name="Southworth D.R."/>
            <person name="Stroud R.M."/>
            <person name="Alessi D.R."/>
            <person name="Davies P."/>
            <person name="Frieman M.B."/>
            <person name="Ideker T."/>
            <person name="Abate C."/>
            <person name="Jouvenet N."/>
            <person name="Kochs G."/>
            <person name="Shoichet B."/>
            <person name="Ott M."/>
            <person name="Palmarini M."/>
            <person name="Shokat K.M."/>
            <person name="Garcia-Sastre A."/>
            <person name="Rassen J.A."/>
            <person name="Grosse R."/>
            <person name="Rosenberg O.S."/>
            <person name="Verba K.A."/>
            <person name="Basler C.F."/>
            <person name="Vignuzzi M."/>
            <person name="Peden A.A."/>
            <person name="Beltrao P."/>
            <person name="Krogan N.J."/>
        </authorList>
    </citation>
    <scope>INTERACTION WITH SARS-COV-2 VIRUS PROTEIN ORF8 (MICROBIAL INFECTION)</scope>
</reference>
<reference key="16">
    <citation type="journal article" date="2021" name="IScience">
        <title>Title: ORF8 contributes to cytokine storm during SARS-CoV-2 infection by activating IL-17 pathway.</title>
        <authorList>
            <person name="Lin X."/>
            <person name="Fu B."/>
            <person name="Yin S."/>
            <person name="Li Z."/>
            <person name="Liu H."/>
            <person name="Zhang H."/>
            <person name="Xing N."/>
            <person name="Wang Y."/>
            <person name="Xue W."/>
            <person name="Xiong Y."/>
            <person name="Zhang S."/>
            <person name="Zhao Q."/>
            <person name="Xu S."/>
            <person name="Zhang J."/>
            <person name="Wang P."/>
            <person name="Nian W."/>
            <person name="Wang X."/>
            <person name="Wu H."/>
        </authorList>
    </citation>
    <scope>INTERACTION WITH SARS-COV-2 VIRUS PROTEIN ORF8 (MICROBIAL INFECTION)</scope>
    <scope>FUNCTION (MICROBIAL INFECTION)</scope>
</reference>
<reference key="17">
    <citation type="journal article" date="2009" name="Nat. Immunol.">
        <title>Structural basis of receptor sharing by interleukin 17 cytokines.</title>
        <authorList>
            <person name="Ely L.K."/>
            <person name="Fischer S."/>
            <person name="Garcia K.C."/>
        </authorList>
    </citation>
    <scope>X-RAY CRYSTALLOGRAPHY (3.3 ANGSTROMS) OF 32-317 IN COMPLEX WITH IL17F</scope>
    <scope>GLYCOSYLATION AT ASN-49; ASN-54; ASN-67; ASN-225 AND ASN-265</scope>
    <scope>FUNCTION</scope>
    <scope>DISULFIDE BONDS</scope>
</reference>
<reference key="18">
    <citation type="journal article" date="2013" name="Nat. Commun.">
        <title>Crystal structures of interleukin 17A and its complex with IL-17 receptor A.</title>
        <authorList>
            <person name="Liu S."/>
            <person name="Song X."/>
            <person name="Chrunyk B.A."/>
            <person name="Shanker S."/>
            <person name="Hoth L.R."/>
            <person name="Marr E.S."/>
            <person name="Griffor M.C."/>
        </authorList>
    </citation>
    <scope>X-RAY CRYSTALLOGRAPHY (3.15 ANGSTROMS) OF 32-317 IN COMPLEX WITH IL17A</scope>
    <scope>DISULFIDE BONDS</scope>
    <scope>SUBUNIT</scope>
    <scope>GLYCOSYLATION AT ASN-49; ASN-54 AND ASN-225</scope>
</reference>
<reference key="19">
    <citation type="journal article" date="2017" name="Sci. Rep.">
        <title>The human IL-17A/F heterodimer: a two-faced cytokine with unique receptor recognition properties.</title>
        <authorList>
            <person name="Goepfert A."/>
            <person name="Lehmann S."/>
            <person name="Wirth E."/>
            <person name="Rondeau J.M."/>
        </authorList>
    </citation>
    <scope>X-RAY CRYSTALLOGRAPHY (3.30 ANGSTROMS) OF 33-320 IN COMPLEX WITH IL17A AND IL17F</scope>
    <scope>SUBUNIT</scope>
</reference>
<reference key="20">
    <citation type="journal article" date="2011" name="Science">
        <title>Chronic mucocutaneous candidiasis in humans with inborn errors of interleukin-17 immunity.</title>
        <authorList>
            <person name="Puel A."/>
            <person name="Cypowyj S."/>
            <person name="Bustamante J."/>
            <person name="Wright J.F."/>
            <person name="Liu L."/>
            <person name="Lim H.K."/>
            <person name="Migaud M."/>
            <person name="Israel L."/>
            <person name="Chrabieh M."/>
            <person name="Audry M."/>
            <person name="Gumbleton M."/>
            <person name="Toulon A."/>
            <person name="Bodemer C."/>
            <person name="El-Baghdadi J."/>
            <person name="Whitters M."/>
            <person name="Paradis T."/>
            <person name="Brooks J."/>
            <person name="Collins M."/>
            <person name="Wolfman N.M."/>
            <person name="Al-Muhsen S."/>
            <person name="Galicchio M."/>
            <person name="Abel L."/>
            <person name="Picard C."/>
            <person name="Casanova J.L."/>
        </authorList>
    </citation>
    <scope>INVOLVEMENT IN IMD51</scope>
    <scope>VARIANT IMD51 284-GLN--ALA-866 DEL</scope>
    <scope>FUNCTION</scope>
</reference>
<evidence type="ECO:0000250" key="1">
    <source>
        <dbReference type="UniProtKB" id="Q60943"/>
    </source>
</evidence>
<evidence type="ECO:0000255" key="2"/>
<evidence type="ECO:0000255" key="3">
    <source>
        <dbReference type="PROSITE-ProRule" id="PRU00867"/>
    </source>
</evidence>
<evidence type="ECO:0000256" key="4">
    <source>
        <dbReference type="SAM" id="MobiDB-lite"/>
    </source>
</evidence>
<evidence type="ECO:0000269" key="5">
    <source>
    </source>
</evidence>
<evidence type="ECO:0000269" key="6">
    <source>
    </source>
</evidence>
<evidence type="ECO:0000269" key="7">
    <source>
    </source>
</evidence>
<evidence type="ECO:0000269" key="8">
    <source>
    </source>
</evidence>
<evidence type="ECO:0000269" key="9">
    <source>
    </source>
</evidence>
<evidence type="ECO:0000269" key="10">
    <source>
    </source>
</evidence>
<evidence type="ECO:0000269" key="11">
    <source>
    </source>
</evidence>
<evidence type="ECO:0000269" key="12">
    <source>
    </source>
</evidence>
<evidence type="ECO:0000269" key="13">
    <source>
    </source>
</evidence>
<evidence type="ECO:0000269" key="14">
    <source>
    </source>
</evidence>
<evidence type="ECO:0000269" key="15">
    <source>
    </source>
</evidence>
<evidence type="ECO:0000269" key="16">
    <source>
    </source>
</evidence>
<evidence type="ECO:0000269" key="17">
    <source>
    </source>
</evidence>
<evidence type="ECO:0000269" key="18">
    <source>
    </source>
</evidence>
<evidence type="ECO:0000269" key="19">
    <source>
    </source>
</evidence>
<evidence type="ECO:0000269" key="20">
    <source>
    </source>
</evidence>
<evidence type="ECO:0000303" key="21">
    <source ref="6"/>
</evidence>
<evidence type="ECO:0000305" key="22"/>
<evidence type="ECO:0000312" key="23">
    <source>
        <dbReference type="HGNC" id="HGNC:5985"/>
    </source>
</evidence>
<evidence type="ECO:0007744" key="24">
    <source>
    </source>
</evidence>
<evidence type="ECO:0007829" key="25">
    <source>
        <dbReference type="PDB" id="4HSA"/>
    </source>
</evidence>
<evidence type="ECO:0007829" key="26">
    <source>
        <dbReference type="PDB" id="4NUX"/>
    </source>
</evidence>
<evidence type="ECO:0007829" key="27">
    <source>
        <dbReference type="PDB" id="5N9B"/>
    </source>
</evidence>
<evidence type="ECO:0007829" key="28">
    <source>
        <dbReference type="PDB" id="7UWM"/>
    </source>
</evidence>
<evidence type="ECO:0007829" key="29">
    <source>
        <dbReference type="PDB" id="7UWN"/>
    </source>
</evidence>
<proteinExistence type="evidence at protein level"/>
<comment type="function">
    <text evidence="1 7 8 9 10 11 12 15 20">Receptor for IL17A and IL17F, major effector cytokines of innate and adaptive immune system involved in antimicrobial host defense and maintenance of tissue integrity. Receptor for IL17A (PubMed:17911633, PubMed:9367539). Receptor for IL17F (PubMed:17911633, PubMed:19838198). Binds to IL17A with higher affinity than to IL17F (PubMed:17911633). Binds IL17A and IL17F homodimers as part of a heterodimeric complex with IL17RC (PubMed:16785495). Also binds heterodimers formed by IL17A and IL17F as part of a heterodimeric complex with IL17RC (PubMed:18684971). Cytokine binding triggers homotypic interaction of IL17RA and IL17RC chains with TRAF3IP2 adapter, leading to TRAF6-mediated activation of NF-kappa-B and MAPkinase pathways, ultimately resulting in transcriptional activation of cytokines, chemokines, antimicrobial peptides and matrix metalloproteinases, with potential strong immune inflammation (PubMed:16785495, PubMed:17911633, PubMed:18684971, PubMed:21350122, PubMed:24120361). Involved in antimicrobial host defense primarily promoting neutrophil activation and recruitment at infection sites to destroy extracellular bacteria and fungi (By similarity). In secondary lymphoid organs, contributes to germinal center formation by regulating the chemotactic response of B cells to CXCL12 and CXCL13, enhancing retention of B cells within the germinal centers, B cell somatic hypermutation rate and selection toward plasma cells (By similarity). Plays a role in the maintenance of the integrity of epithelial barriers during homeostasis and pathogen infection. Stimulates the production of antimicrobial beta-defensins DEFB1, DEFB103A, and DEFB104A by mucosal epithelial cells, limiting the entry of microbes through the epithelial barriers (By similarity). Involved in antiviral host defense through various mechanisms. Enhances immunity against West Nile virus by promoting T cell cytotoxicity. Contributes to Influenza virus clearance by driving the differentiation of B-1a B cells, providing for production of virus-specific IgM antibodies at first line of host defense (By similarity). Receptor for IL17C as part of a heterodimeric complex with IL17RE (PubMed:21993848).</text>
</comment>
<comment type="function">
    <text evidence="19">(Microbial infection) Receptor for SARS coronavirus-2/SARS-CoV-2 virus protein ORF8, leading to IL17 pathway activation and an increased secretion of pro-inflammatory factors through activating NF-kappa-B signaling pathway.</text>
</comment>
<comment type="subunit">
    <text evidence="7 9 12 13 15 16 17">Forms heterodimers with IL17RC; the heterodimer binds IL17A and IL17F homodimers as well as the heterodimer formed by IL17A and IL17F (PubMed:16785495, PubMed:18684971, PubMed:32187518). Forms complexes with 2:1 binding stoichiometry: two receptor chains for one interleukin molecule (PubMed:32187518). IL17A homodimer preferentially drives the formation of IL17RA-IL17RC heterodimeric receptor complex, whereas IL17F homodimer forms predominantly complexes with IL17RC homodimer (PubMed:32187518). IL17A homodimer adopts an asymmetrical ternary structure with one IL17RA molecule, allowing for high affinity interactions of one IL17A monomer with one IL17RA molecule (via D1 and D2 domains), while disfavoring binding of a second IL17RA molecule on the other IL17A monomer (PubMed:23695682). IL17A-IL17F forms complexes with IL17RA-IL17RC, but with lower affinity when compared to IL17A homodimer (PubMed:32187518). IL17RA chain cannot distinguish between IL17A and IL17F molecules, potentially enabling the formation of topologically distinct complexes (PubMed:28827714). Interacts with TRAF3IP2 (PubMed:24120361). Forms heterodimers with IL17RE; the heterodimer binds IL17C (PubMed:16785495, PubMed:18684971, PubMed:21993848).</text>
</comment>
<comment type="subunit">
    <text evidence="18 19">(Microbial infection) Interacts with SARS coronavirus-2/SARS-CoV-2 virus protein ORF8.</text>
</comment>
<comment type="interaction">
    <interactant intactId="EBI-5591258">
        <id>Q96F46</id>
    </interactant>
    <interactant intactId="EBI-5591275">
        <id>Q8NFR9</id>
        <label>IL17RE</label>
    </interactant>
    <organismsDiffer>false</organismsDiffer>
    <experiments>2</experiments>
</comment>
<comment type="interaction">
    <interactant intactId="EBI-5591258">
        <id>Q96F46</id>
    </interactant>
    <interactant intactId="EBI-25475900">
        <id>P0DTC8</id>
        <label>8</label>
    </interactant>
    <organismsDiffer>true</organismsDiffer>
    <experiments>3</experiments>
</comment>
<comment type="subcellular location">
    <molecule>Isoform 1</molecule>
    <subcellularLocation>
        <location evidence="8">Cell membrane</location>
        <topology evidence="2">Single-pass type I membrane protein</topology>
    </subcellularLocation>
</comment>
<comment type="subcellular location">
    <molecule>Isoform 2</molecule>
    <subcellularLocation>
        <location evidence="14">Secreted</location>
    </subcellularLocation>
</comment>
<comment type="alternative products">
    <event type="alternative splicing"/>
    <isoform>
        <id>Q96F46-1</id>
        <name>1</name>
        <sequence type="displayed"/>
    </isoform>
    <isoform>
        <id>Q96F46-2</id>
        <name>2</name>
        <sequence type="described" ref="VSP_053496"/>
    </isoform>
</comment>
<comment type="tissue specificity">
    <text evidence="12">Widely expressed.</text>
</comment>
<comment type="PTM">
    <text evidence="10">Glycosylated.</text>
</comment>
<comment type="disease" evidence="11">
    <disease id="DI-03104">
        <name>Immunodeficiency 51</name>
        <acronym>IMD51</acronym>
        <description>A primary immunodeficiency disorder with altered immune responses and impaired clearance of fungal infections, selective against Candida. It is characterized by persistent and/or recurrent infections of the skin, nails and mucous membranes caused by organisms of the genus Candida, mainly Candida albicans.</description>
        <dbReference type="MIM" id="613953"/>
    </disease>
    <text>The disease is caused by variants affecting the gene represented in this entry.</text>
</comment>
<comment type="miscellaneous">
    <molecule>Isoform 2</molecule>
    <text evidence="22">Soluble isoform lacking the transmembrane segment.</text>
</comment>
<keyword id="KW-0002">3D-structure</keyword>
<keyword id="KW-1064">Adaptive immunity</keyword>
<keyword id="KW-0025">Alternative splicing</keyword>
<keyword id="KW-1003">Cell membrane</keyword>
<keyword id="KW-0903">Direct protein sequencing</keyword>
<keyword id="KW-1015">Disulfide bond</keyword>
<keyword id="KW-0325">Glycoprotein</keyword>
<keyword id="KW-0945">Host-virus interaction</keyword>
<keyword id="KW-0391">Immunity</keyword>
<keyword id="KW-0395">Inflammatory response</keyword>
<keyword id="KW-0399">Innate immunity</keyword>
<keyword id="KW-0472">Membrane</keyword>
<keyword id="KW-0597">Phosphoprotein</keyword>
<keyword id="KW-1267">Proteomics identification</keyword>
<keyword id="KW-0675">Receptor</keyword>
<keyword id="KW-1185">Reference proteome</keyword>
<keyword id="KW-0964">Secreted</keyword>
<keyword id="KW-0732">Signal</keyword>
<keyword id="KW-0812">Transmembrane</keyword>
<keyword id="KW-1133">Transmembrane helix</keyword>
<sequence length="866" mass="96122">MGAARSPPSAVPGPLLGLLLLLLGVLAPGGASLRLLDHRALVCSQPGLNCTVKNSTCLDDSWIHPRNLTPSSPKDLQIQLHFAHTQQGDLFPVAHIEWTLQTDASILYLEGAELSVLQLNTNERLCVRFEFLSKLRHHHRRWRFTFSHFVVDPDQEYEVTVHHLPKPIPDGDPNHQSKNFLVPDCEHARMKVTTPCMSSGSLWDPNITVETLEAHQLRVSFTLWNESTHYQILLTSFPHMENHSCFEHMHHIPAPRPEEFHQRSNVTLTLRNLKGCCRHQVQIQPFFSSCLNDCLRHSATVSCPEMPDTPEPIPDYMPLWVYWFITGISILLVGSVILLIVCMTWRLAGPGSEKYSDDTKYTDGLPAADLIPPPLKPRKVWIIYSADHPLYVDVVLKFAQFLLTACGTEVALDLLEEQAISEAGVMTWVGRQKQEMVESNSKIIVLCSRGTRAKWQALLGRGAPVRLRCDHGKPVGDLFTAAMNMILPDFKRPACFGTYVVCYFSEVSCDGDVPDLFGAAPRYPLMDRFEEVYFRIQDLEMFQPGRMHRVGELSGDNYLRSPGGRQLRAALDRFRDWQVRCPDWFECENLYSADDQDAPSLDEEVFEEPLLPPGTGIVKRAPLVREPGSQACLAIDPLVGEEGGAAVAKLEPHLQPRGQPAPQPLHTLVLAAEEGALVAAVEPGPLADGAAVRLALAGEGEACPLLGSPGAGRNSVLFLPVDPEDSPLGSSTPMASPDLLPEDVREHLEGLMLSLFEQSLSCQAQGGCSRPAMVLTDPHTPYEEEQRQSVQSDQGYISRSSPQPPEGLTEMEEEEEEEQDPGKPALPLSPEDLESLRSLQRQLLFRQLQKNSGWDTMGSESEGPSA</sequence>